<evidence type="ECO:0000255" key="1">
    <source>
        <dbReference type="HAMAP-Rule" id="MF_01281"/>
    </source>
</evidence>
<accession>A4FW32</accession>
<gene>
    <name evidence="1" type="primary">dadD</name>
    <name type="ordered locus">MmarC5_0086</name>
</gene>
<organism>
    <name type="scientific">Methanococcus maripaludis (strain C5 / ATCC BAA-1333)</name>
    <dbReference type="NCBI Taxonomy" id="402880"/>
    <lineage>
        <taxon>Archaea</taxon>
        <taxon>Methanobacteriati</taxon>
        <taxon>Methanobacteriota</taxon>
        <taxon>Methanomada group</taxon>
        <taxon>Methanococci</taxon>
        <taxon>Methanococcales</taxon>
        <taxon>Methanococcaceae</taxon>
        <taxon>Methanococcus</taxon>
    </lineage>
</organism>
<keyword id="KW-0378">Hydrolase</keyword>
<keyword id="KW-0479">Metal-binding</keyword>
<keyword id="KW-0862">Zinc</keyword>
<feature type="chain" id="PRO_0000312473" description="5'-deoxyadenosine deaminase">
    <location>
        <begin position="1"/>
        <end position="422"/>
    </location>
</feature>
<feature type="binding site" evidence="1">
    <location>
        <position position="57"/>
    </location>
    <ligand>
        <name>Zn(2+)</name>
        <dbReference type="ChEBI" id="CHEBI:29105"/>
    </ligand>
</feature>
<feature type="binding site" evidence="1">
    <location>
        <position position="59"/>
    </location>
    <ligand>
        <name>Zn(2+)</name>
        <dbReference type="ChEBI" id="CHEBI:29105"/>
    </ligand>
</feature>
<feature type="binding site" evidence="1">
    <location>
        <position position="86"/>
    </location>
    <ligand>
        <name>substrate</name>
    </ligand>
</feature>
<feature type="binding site" evidence="1">
    <location>
        <position position="178"/>
    </location>
    <ligand>
        <name>substrate</name>
    </ligand>
</feature>
<feature type="binding site" evidence="1">
    <location>
        <position position="205"/>
    </location>
    <ligand>
        <name>Zn(2+)</name>
        <dbReference type="ChEBI" id="CHEBI:29105"/>
    </ligand>
</feature>
<feature type="binding site" evidence="1">
    <location>
        <position position="208"/>
    </location>
    <ligand>
        <name>substrate</name>
    </ligand>
</feature>
<feature type="binding site" evidence="1">
    <location>
        <position position="294"/>
    </location>
    <ligand>
        <name>substrate</name>
    </ligand>
</feature>
<feature type="binding site" evidence="1">
    <location>
        <position position="294"/>
    </location>
    <ligand>
        <name>Zn(2+)</name>
        <dbReference type="ChEBI" id="CHEBI:29105"/>
    </ligand>
</feature>
<reference key="1">
    <citation type="submission" date="2007-03" db="EMBL/GenBank/DDBJ databases">
        <title>Complete sequence of chromosome of Methanococcus maripaludis C5.</title>
        <authorList>
            <consortium name="US DOE Joint Genome Institute"/>
            <person name="Copeland A."/>
            <person name="Lucas S."/>
            <person name="Lapidus A."/>
            <person name="Barry K."/>
            <person name="Glavina del Rio T."/>
            <person name="Dalin E."/>
            <person name="Tice H."/>
            <person name="Pitluck S."/>
            <person name="Chertkov O."/>
            <person name="Brettin T."/>
            <person name="Bruce D."/>
            <person name="Han C."/>
            <person name="Detter J.C."/>
            <person name="Schmutz J."/>
            <person name="Larimer F."/>
            <person name="Land M."/>
            <person name="Hauser L."/>
            <person name="Kyrpides N."/>
            <person name="Mikhailova N."/>
            <person name="Sieprawska-Lupa M."/>
            <person name="Whitman W.B."/>
            <person name="Richardson P."/>
        </authorList>
    </citation>
    <scope>NUCLEOTIDE SEQUENCE [LARGE SCALE GENOMIC DNA]</scope>
    <source>
        <strain>C5 / ATCC BAA-1333</strain>
    </source>
</reference>
<dbReference type="EC" id="3.5.4.41" evidence="1"/>
<dbReference type="EC" id="3.5.4.31" evidence="1"/>
<dbReference type="EC" id="3.5.4.4" evidence="1"/>
<dbReference type="EC" id="3.5.4.28" evidence="1"/>
<dbReference type="EMBL" id="CP000609">
    <property type="protein sequence ID" value="ABO34403.1"/>
    <property type="molecule type" value="Genomic_DNA"/>
</dbReference>
<dbReference type="RefSeq" id="WP_011867864.1">
    <property type="nucleotide sequence ID" value="NC_009135.1"/>
</dbReference>
<dbReference type="SMR" id="A4FW32"/>
<dbReference type="STRING" id="402880.MmarC5_0086"/>
<dbReference type="GeneID" id="4929346"/>
<dbReference type="KEGG" id="mmq:MmarC5_0086"/>
<dbReference type="eggNOG" id="arCOG00695">
    <property type="taxonomic scope" value="Archaea"/>
</dbReference>
<dbReference type="HOGENOM" id="CLU_012358_2_1_2"/>
<dbReference type="OrthoDB" id="372084at2157"/>
<dbReference type="UniPathway" id="UPA00315"/>
<dbReference type="Proteomes" id="UP000000253">
    <property type="component" value="Chromosome"/>
</dbReference>
<dbReference type="GO" id="GO:0090613">
    <property type="term" value="F:5'-deoxyadenosine deaminase activity"/>
    <property type="evidence" value="ECO:0007669"/>
    <property type="project" value="UniProtKB-UniRule"/>
</dbReference>
<dbReference type="GO" id="GO:0090614">
    <property type="term" value="F:5'-methylthioadenosine deaminase activity"/>
    <property type="evidence" value="ECO:0007669"/>
    <property type="project" value="UniProtKB-EC"/>
</dbReference>
<dbReference type="GO" id="GO:0004000">
    <property type="term" value="F:adenosine deaminase activity"/>
    <property type="evidence" value="ECO:0007669"/>
    <property type="project" value="UniProtKB-UniRule"/>
</dbReference>
<dbReference type="GO" id="GO:0046872">
    <property type="term" value="F:metal ion binding"/>
    <property type="evidence" value="ECO:0007669"/>
    <property type="project" value="UniProtKB-KW"/>
</dbReference>
<dbReference type="GO" id="GO:0050270">
    <property type="term" value="F:S-adenosylhomocysteine deaminase activity"/>
    <property type="evidence" value="ECO:0007669"/>
    <property type="project" value="UniProtKB-EC"/>
</dbReference>
<dbReference type="GO" id="GO:0006556">
    <property type="term" value="P:S-adenosylmethionine biosynthetic process"/>
    <property type="evidence" value="ECO:0007669"/>
    <property type="project" value="UniProtKB-UniRule"/>
</dbReference>
<dbReference type="CDD" id="cd01298">
    <property type="entry name" value="ATZ_TRZ_like"/>
    <property type="match status" value="1"/>
</dbReference>
<dbReference type="FunFam" id="3.20.20.140:FF:000014">
    <property type="entry name" value="5-methylthioadenosine/S-adenosylhomocysteine deaminase"/>
    <property type="match status" value="1"/>
</dbReference>
<dbReference type="Gene3D" id="3.20.20.140">
    <property type="entry name" value="Metal-dependent hydrolases"/>
    <property type="match status" value="1"/>
</dbReference>
<dbReference type="Gene3D" id="2.30.40.10">
    <property type="entry name" value="Urease, subunit C, domain 1"/>
    <property type="match status" value="1"/>
</dbReference>
<dbReference type="HAMAP" id="MF_01281">
    <property type="entry name" value="MTA_SAH_deamin"/>
    <property type="match status" value="1"/>
</dbReference>
<dbReference type="InterPro" id="IPR006680">
    <property type="entry name" value="Amidohydro-rel"/>
</dbReference>
<dbReference type="InterPro" id="IPR023512">
    <property type="entry name" value="Deaminase_MtaD/DadD"/>
</dbReference>
<dbReference type="InterPro" id="IPR011059">
    <property type="entry name" value="Metal-dep_hydrolase_composite"/>
</dbReference>
<dbReference type="InterPro" id="IPR032466">
    <property type="entry name" value="Metal_Hydrolase"/>
</dbReference>
<dbReference type="InterPro" id="IPR050287">
    <property type="entry name" value="MTA/SAH_deaminase"/>
</dbReference>
<dbReference type="PANTHER" id="PTHR43794:SF11">
    <property type="entry name" value="AMIDOHYDROLASE-RELATED DOMAIN-CONTAINING PROTEIN"/>
    <property type="match status" value="1"/>
</dbReference>
<dbReference type="PANTHER" id="PTHR43794">
    <property type="entry name" value="AMINOHYDROLASE SSNA-RELATED"/>
    <property type="match status" value="1"/>
</dbReference>
<dbReference type="Pfam" id="PF01979">
    <property type="entry name" value="Amidohydro_1"/>
    <property type="match status" value="1"/>
</dbReference>
<dbReference type="SUPFAM" id="SSF51338">
    <property type="entry name" value="Composite domain of metallo-dependent hydrolases"/>
    <property type="match status" value="1"/>
</dbReference>
<dbReference type="SUPFAM" id="SSF51556">
    <property type="entry name" value="Metallo-dependent hydrolases"/>
    <property type="match status" value="1"/>
</dbReference>
<name>DADD_METM5</name>
<proteinExistence type="inferred from homology"/>
<sequence length="422" mass="46811">MILVKDAIINGKKQNMLVEGNIIKKIGNISNSEVSKDETEIIDGKNCVLIPGLINTHTHVPMSLFRGVADDIPLMDWLSGHIWPMESKLNEKIVYAGTLLGTIEMIKSGTTAFNDMYFFLDSIIKAVDETGIRSTIAYGMIDLFDEEKREKELKTARESLEMIKNLNNSRITGALGPHAPYTCSKEILESTNALAREFNVPIHIHMNETLDEINQVVERTGMRPFEYLNSFGFFEDVTTICAHCVHLSDSEIQIMKEKNMFAAHNPVSNLKLASGVSPVLKLLENNIPVTLGTDGCGSNNNMNLFEEIKAVALIHKGVNLNPVAVTAKEAFEFGTKNGAKALNINSGEIKEGKLADFVLINMKKPYLTPKENIESHLVYSFNGVVDTVVIDGKIVLNAGKMVNIDEEKVYELAEEAYFELAK</sequence>
<comment type="function">
    <text evidence="1">Catalyzes the deamination of three SAM-derived enzymatic products, namely 5'-deoxyadenosine, S-adenosyl-L-homocysteine, and 5'-methylthioadenosine, to produce the inosine analogs. Can also deaminate adenosine. The preferred substrate for this enzyme is 5'-deoxyadenosine, but all these substrates are efficiently deaminated. Likely functions in a S-adenosyl-L-methionine (SAM) recycling pathway from S-adenosyl-L-homocysteine (SAH) produced from SAM-dependent methylation reactions. May also be involved in the recycling of 5'-deoxyadenosine, whereupon the 5'-deoxyribose moiety of 5'-deoxyinosine is further metabolized to deoxyhexoses used for the biosynthesis of aromatic amino acids in methanogens.</text>
</comment>
<comment type="catalytic activity">
    <reaction evidence="1">
        <text>5'-deoxyadenosine + H2O + H(+) = 5'-deoxyinosine + NH4(+)</text>
        <dbReference type="Rhea" id="RHEA:42892"/>
        <dbReference type="ChEBI" id="CHEBI:15377"/>
        <dbReference type="ChEBI" id="CHEBI:15378"/>
        <dbReference type="ChEBI" id="CHEBI:17319"/>
        <dbReference type="ChEBI" id="CHEBI:28938"/>
        <dbReference type="ChEBI" id="CHEBI:82775"/>
        <dbReference type="EC" id="3.5.4.41"/>
    </reaction>
    <physiologicalReaction direction="left-to-right" evidence="1">
        <dbReference type="Rhea" id="RHEA:42893"/>
    </physiologicalReaction>
</comment>
<comment type="catalytic activity">
    <reaction evidence="1">
        <text>S-adenosyl-L-homocysteine + H2O + H(+) = S-inosyl-L-homocysteine + NH4(+)</text>
        <dbReference type="Rhea" id="RHEA:20716"/>
        <dbReference type="ChEBI" id="CHEBI:15377"/>
        <dbReference type="ChEBI" id="CHEBI:15378"/>
        <dbReference type="ChEBI" id="CHEBI:28938"/>
        <dbReference type="ChEBI" id="CHEBI:57856"/>
        <dbReference type="ChEBI" id="CHEBI:57985"/>
        <dbReference type="EC" id="3.5.4.28"/>
    </reaction>
    <physiologicalReaction direction="left-to-right" evidence="1">
        <dbReference type="Rhea" id="RHEA:20717"/>
    </physiologicalReaction>
</comment>
<comment type="catalytic activity">
    <reaction evidence="1">
        <text>S-methyl-5'-thioadenosine + H2O + H(+) = S-methyl-5'-thioinosine + NH4(+)</text>
        <dbReference type="Rhea" id="RHEA:25025"/>
        <dbReference type="ChEBI" id="CHEBI:15377"/>
        <dbReference type="ChEBI" id="CHEBI:15378"/>
        <dbReference type="ChEBI" id="CHEBI:17509"/>
        <dbReference type="ChEBI" id="CHEBI:28938"/>
        <dbReference type="ChEBI" id="CHEBI:48595"/>
        <dbReference type="EC" id="3.5.4.31"/>
    </reaction>
    <physiologicalReaction direction="left-to-right" evidence="1">
        <dbReference type="Rhea" id="RHEA:25026"/>
    </physiologicalReaction>
</comment>
<comment type="catalytic activity">
    <reaction evidence="1">
        <text>adenosine + H2O + H(+) = inosine + NH4(+)</text>
        <dbReference type="Rhea" id="RHEA:24408"/>
        <dbReference type="ChEBI" id="CHEBI:15377"/>
        <dbReference type="ChEBI" id="CHEBI:15378"/>
        <dbReference type="ChEBI" id="CHEBI:16335"/>
        <dbReference type="ChEBI" id="CHEBI:17596"/>
        <dbReference type="ChEBI" id="CHEBI:28938"/>
        <dbReference type="EC" id="3.5.4.4"/>
    </reaction>
    <physiologicalReaction direction="left-to-right" evidence="1">
        <dbReference type="Rhea" id="RHEA:24409"/>
    </physiologicalReaction>
</comment>
<comment type="cofactor">
    <cofactor evidence="1">
        <name>Zn(2+)</name>
        <dbReference type="ChEBI" id="CHEBI:29105"/>
    </cofactor>
    <text evidence="1">Binds 1 zinc ion per subunit.</text>
</comment>
<comment type="pathway">
    <text evidence="1">Amino-acid biosynthesis; S-adenosyl-L-methionine biosynthesis.</text>
</comment>
<comment type="subunit">
    <text evidence="1">Homotetramer.</text>
</comment>
<comment type="miscellaneous">
    <text evidence="1">SAH is a product of SAM methyltransferases and is known to be a feedback inhibitor of these enzymes. As a result of this inhibition, organisms have evolved efficient enzymes to metabolize SAH via different pathways. The pathway found in methanogens differs from the canonical pathway, it uses the deamination of S-adenosyl-L-homocysteine to form S-inosyl-L-homocysteine for the regeneration of SAM from S-adenosyl-L-homocysteine. 5'-deoxyadenosine is a radical SAM enzyme reaction product which strongly inhibits radical SAM enzymes. A pathway for removing this product must be present in methanogens where the MTA/SAH nucleosidase which normally metabolizes this compound is absent.</text>
</comment>
<comment type="similarity">
    <text evidence="1">Belongs to the metallo-dependent hydrolases superfamily. MTA/SAH deaminase family.</text>
</comment>
<protein>
    <recommendedName>
        <fullName evidence="1">5'-deoxyadenosine deaminase</fullName>
        <shortName evidence="1">5'-dA deaminase</shortName>
        <ecNumber evidence="1">3.5.4.41</ecNumber>
    </recommendedName>
    <alternativeName>
        <fullName evidence="1">5'-methylthioadenosine deaminase</fullName>
        <shortName evidence="1">MTA deaminase</shortName>
        <ecNumber evidence="1">3.5.4.31</ecNumber>
    </alternativeName>
    <alternativeName>
        <fullName evidence="1">Adenosine deaminase</fullName>
        <ecNumber evidence="1">3.5.4.4</ecNumber>
    </alternativeName>
    <alternativeName>
        <fullName evidence="1">S-adenosylhomocysteine deaminase</fullName>
        <shortName evidence="1">SAH deaminase</shortName>
        <ecNumber evidence="1">3.5.4.28</ecNumber>
    </alternativeName>
</protein>